<organism>
    <name type="scientific">Staphylococcus aureus (strain NCTC 8325 / PS 47)</name>
    <dbReference type="NCBI Taxonomy" id="93061"/>
    <lineage>
        <taxon>Bacteria</taxon>
        <taxon>Bacillati</taxon>
        <taxon>Bacillota</taxon>
        <taxon>Bacilli</taxon>
        <taxon>Bacillales</taxon>
        <taxon>Staphylococcaceae</taxon>
        <taxon>Staphylococcus</taxon>
    </lineage>
</organism>
<protein>
    <recommendedName>
        <fullName>Protein NrdI</fullName>
    </recommendedName>
</protein>
<evidence type="ECO:0000250" key="1"/>
<evidence type="ECO:0000305" key="2"/>
<sequence>MKIIYFSFTGNVRRFIKRTELENTLEITAENCMEPVHEPFIIVTGTIGFGEVPEPVQSFLEVNHQYIRGVAASGNRNWGLNFAKAGRTISEEYNVPLLMKFELHGKNKDVIEFKNKVGNFNENHGREKVQSY</sequence>
<accession>Q2G079</accession>
<accession>P68813</accession>
<accession>Q99VP3</accession>
<accession>Q9Z5C9</accession>
<proteinExistence type="inferred from homology"/>
<dbReference type="EMBL" id="AJ312387">
    <property type="protein sequence ID" value="CAC43039.1"/>
    <property type="molecule type" value="Genomic_DNA"/>
</dbReference>
<dbReference type="EMBL" id="CP000253">
    <property type="protein sequence ID" value="ABD29874.1"/>
    <property type="molecule type" value="Genomic_DNA"/>
</dbReference>
<dbReference type="RefSeq" id="WP_000692521.1">
    <property type="nucleotide sequence ID" value="NZ_LS483365.1"/>
</dbReference>
<dbReference type="RefSeq" id="YP_499301.1">
    <property type="nucleotide sequence ID" value="NC_007795.1"/>
</dbReference>
<dbReference type="SMR" id="Q2G079"/>
<dbReference type="STRING" id="93061.SAOUHSC_00741"/>
<dbReference type="PaxDb" id="1280-SAXN108_0797"/>
<dbReference type="GeneID" id="3920986"/>
<dbReference type="KEGG" id="sao:SAOUHSC_00741"/>
<dbReference type="PATRIC" id="fig|93061.5.peg.670"/>
<dbReference type="eggNOG" id="COG1780">
    <property type="taxonomic scope" value="Bacteria"/>
</dbReference>
<dbReference type="HOGENOM" id="CLU_114845_3_0_9"/>
<dbReference type="OrthoDB" id="350535at2"/>
<dbReference type="PRO" id="PR:Q2G079"/>
<dbReference type="Proteomes" id="UP000008816">
    <property type="component" value="Chromosome"/>
</dbReference>
<dbReference type="GO" id="GO:0010181">
    <property type="term" value="F:FMN binding"/>
    <property type="evidence" value="ECO:0000318"/>
    <property type="project" value="GO_Central"/>
</dbReference>
<dbReference type="GO" id="GO:0036211">
    <property type="term" value="P:protein modification process"/>
    <property type="evidence" value="ECO:0007669"/>
    <property type="project" value="InterPro"/>
</dbReference>
<dbReference type="Gene3D" id="3.40.50.360">
    <property type="match status" value="1"/>
</dbReference>
<dbReference type="HAMAP" id="MF_00128">
    <property type="entry name" value="NrdI"/>
    <property type="match status" value="1"/>
</dbReference>
<dbReference type="InterPro" id="IPR029039">
    <property type="entry name" value="Flavoprotein-like_sf"/>
</dbReference>
<dbReference type="InterPro" id="IPR020852">
    <property type="entry name" value="RNR_Ib_NrdI_bac"/>
</dbReference>
<dbReference type="InterPro" id="IPR004465">
    <property type="entry name" value="RNR_NrdI"/>
</dbReference>
<dbReference type="NCBIfam" id="TIGR00333">
    <property type="entry name" value="nrdI"/>
    <property type="match status" value="1"/>
</dbReference>
<dbReference type="PANTHER" id="PTHR37297">
    <property type="entry name" value="PROTEIN NRDI"/>
    <property type="match status" value="1"/>
</dbReference>
<dbReference type="PANTHER" id="PTHR37297:SF1">
    <property type="entry name" value="PROTEIN NRDI"/>
    <property type="match status" value="1"/>
</dbReference>
<dbReference type="Pfam" id="PF07972">
    <property type="entry name" value="Flavodoxin_NdrI"/>
    <property type="match status" value="1"/>
</dbReference>
<dbReference type="PIRSF" id="PIRSF005087">
    <property type="entry name" value="NrdI"/>
    <property type="match status" value="1"/>
</dbReference>
<dbReference type="SUPFAM" id="SSF52218">
    <property type="entry name" value="Flavoproteins"/>
    <property type="match status" value="1"/>
</dbReference>
<gene>
    <name type="primary">nrdI</name>
    <name type="ordered locus">SAOUHSC_00741</name>
</gene>
<reference key="1">
    <citation type="journal article" date="2001" name="J. Bacteriol.">
        <title>Analysis of transcription of the Staphylococcus aureus aerobic class Ib and anaerobic class III ribonucleotide reductase genes in response to oxygen.</title>
        <authorList>
            <person name="Masalha M."/>
            <person name="Borovok I."/>
            <person name="Schreiber R."/>
            <person name="Aharonowitz Y."/>
            <person name="Cohen G."/>
        </authorList>
    </citation>
    <scope>NUCLEOTIDE SEQUENCE [GENOMIC DNA]</scope>
</reference>
<reference key="2">
    <citation type="book" date="2006" name="Gram positive pathogens, 2nd edition">
        <title>The Staphylococcus aureus NCTC 8325 genome.</title>
        <editorList>
            <person name="Fischetti V."/>
            <person name="Novick R."/>
            <person name="Ferretti J."/>
            <person name="Portnoy D."/>
            <person name="Rood J."/>
        </editorList>
        <authorList>
            <person name="Gillaspy A.F."/>
            <person name="Worrell V."/>
            <person name="Orvis J."/>
            <person name="Roe B.A."/>
            <person name="Dyer D.W."/>
            <person name="Iandolo J.J."/>
        </authorList>
    </citation>
    <scope>NUCLEOTIDE SEQUENCE [LARGE SCALE GENOMIC DNA]</scope>
    <source>
        <strain>NCTC 8325 / PS 47</strain>
    </source>
</reference>
<keyword id="KW-1185">Reference proteome</keyword>
<comment type="function">
    <text evidence="1">Probably involved in ribonucleotide reductase function.</text>
</comment>
<comment type="similarity">
    <text evidence="2">Belongs to the NrdI family.</text>
</comment>
<name>NRDI_STAA8</name>
<feature type="chain" id="PRO_0000247942" description="Protein NrdI">
    <location>
        <begin position="1"/>
        <end position="132"/>
    </location>
</feature>